<organism>
    <name type="scientific">Metallosphaera sedula (strain ATCC 51363 / DSM 5348 / JCM 9185 / NBRC 15509 / TH2)</name>
    <dbReference type="NCBI Taxonomy" id="399549"/>
    <lineage>
        <taxon>Archaea</taxon>
        <taxon>Thermoproteota</taxon>
        <taxon>Thermoprotei</taxon>
        <taxon>Sulfolobales</taxon>
        <taxon>Sulfolobaceae</taxon>
        <taxon>Metallosphaera</taxon>
    </lineage>
</organism>
<reference key="1">
    <citation type="journal article" date="2008" name="Appl. Environ. Microbiol.">
        <title>The genome sequence of the metal-mobilizing, extremely thermoacidophilic archaeon Metallosphaera sedula provides insights into bioleaching-associated metabolism.</title>
        <authorList>
            <person name="Auernik K.S."/>
            <person name="Maezato Y."/>
            <person name="Blum P.H."/>
            <person name="Kelly R.M."/>
        </authorList>
    </citation>
    <scope>NUCLEOTIDE SEQUENCE [LARGE SCALE GENOMIC DNA]</scope>
    <source>
        <strain>ATCC 51363 / DSM 5348 / JCM 9185 / NBRC 15509 / TH2</strain>
    </source>
</reference>
<keyword id="KW-0173">Coenzyme A biosynthesis</keyword>
<keyword id="KW-0963">Cytoplasm</keyword>
<keyword id="KW-0460">Magnesium</keyword>
<keyword id="KW-0479">Metal-binding</keyword>
<keyword id="KW-1185">Reference proteome</keyword>
<keyword id="KW-0808">Transferase</keyword>
<sequence length="262" mass="28971">MQRLTIRDFLKKKGKEKITMLTVYDYSMAKILSETEVDGFLVGDSLGMNVLGFPSTLQVTMDHMIHHTRAVVRASPRQLIVVDMPFMSYEPSNEVAVKNAGILASEGADAVKLEGGVEVYERVANIVKFGVPVMGHIGLTPQRYLTLGGYRTVKDEAKLISDALALEEAGAFSIVIENVYAEIAKKITEKVSIPTICIGAGPHCDGQVLVIHDLLGMGDIQPYFSRKYLDLKAEIREAVKRYINDVKTGTFPGRENYKSRES</sequence>
<accession>A4YED8</accession>
<protein>
    <recommendedName>
        <fullName evidence="1">3-methyl-2-oxobutanoate hydroxymethyltransferase</fullName>
        <ecNumber evidence="1">2.1.2.11</ecNumber>
    </recommendedName>
    <alternativeName>
        <fullName evidence="1">Ketopantoate hydroxymethyltransferase</fullName>
        <shortName evidence="1">KPHMT</shortName>
    </alternativeName>
</protein>
<comment type="function">
    <text evidence="1">Catalyzes the reversible reaction in which hydroxymethyl group from 5,10-methylenetetrahydrofolate is transferred onto alpha-ketoisovalerate to form ketopantoate.</text>
</comment>
<comment type="catalytic activity">
    <reaction evidence="1">
        <text>3-methyl-2-oxobutanoate + (6R)-5,10-methylene-5,6,7,8-tetrahydrofolate + H2O = 2-dehydropantoate + (6S)-5,6,7,8-tetrahydrofolate</text>
        <dbReference type="Rhea" id="RHEA:11824"/>
        <dbReference type="ChEBI" id="CHEBI:11561"/>
        <dbReference type="ChEBI" id="CHEBI:11851"/>
        <dbReference type="ChEBI" id="CHEBI:15377"/>
        <dbReference type="ChEBI" id="CHEBI:15636"/>
        <dbReference type="ChEBI" id="CHEBI:57453"/>
        <dbReference type="EC" id="2.1.2.11"/>
    </reaction>
</comment>
<comment type="cofactor">
    <cofactor evidence="1">
        <name>Mg(2+)</name>
        <dbReference type="ChEBI" id="CHEBI:18420"/>
    </cofactor>
    <text evidence="1">Binds 1 Mg(2+) ion per subunit.</text>
</comment>
<comment type="pathway">
    <text evidence="1">Cofactor biosynthesis; coenzyme A biosynthesis.</text>
</comment>
<comment type="subunit">
    <text evidence="1">Homodecamer; pentamer of dimers.</text>
</comment>
<comment type="subcellular location">
    <subcellularLocation>
        <location evidence="1">Cytoplasm</location>
    </subcellularLocation>
</comment>
<comment type="similarity">
    <text evidence="1">Belongs to the PanB family.</text>
</comment>
<feature type="chain" id="PRO_1000118129" description="3-methyl-2-oxobutanoate hydroxymethyltransferase">
    <location>
        <begin position="1"/>
        <end position="262"/>
    </location>
</feature>
<feature type="active site" description="Proton acceptor" evidence="1">
    <location>
        <position position="177"/>
    </location>
</feature>
<feature type="binding site" evidence="1">
    <location>
        <begin position="44"/>
        <end position="45"/>
    </location>
    <ligand>
        <name>3-methyl-2-oxobutanoate</name>
        <dbReference type="ChEBI" id="CHEBI:11851"/>
    </ligand>
</feature>
<feature type="binding site" evidence="1">
    <location>
        <position position="44"/>
    </location>
    <ligand>
        <name>Mg(2+)</name>
        <dbReference type="ChEBI" id="CHEBI:18420"/>
    </ligand>
</feature>
<feature type="binding site" evidence="1">
    <location>
        <position position="83"/>
    </location>
    <ligand>
        <name>3-methyl-2-oxobutanoate</name>
        <dbReference type="ChEBI" id="CHEBI:11851"/>
    </ligand>
</feature>
<feature type="binding site" evidence="1">
    <location>
        <position position="83"/>
    </location>
    <ligand>
        <name>Mg(2+)</name>
        <dbReference type="ChEBI" id="CHEBI:18420"/>
    </ligand>
</feature>
<feature type="binding site" evidence="1">
    <location>
        <position position="112"/>
    </location>
    <ligand>
        <name>3-methyl-2-oxobutanoate</name>
        <dbReference type="ChEBI" id="CHEBI:11851"/>
    </ligand>
</feature>
<feature type="binding site" evidence="1">
    <location>
        <position position="114"/>
    </location>
    <ligand>
        <name>Mg(2+)</name>
        <dbReference type="ChEBI" id="CHEBI:18420"/>
    </ligand>
</feature>
<name>PANB_METS5</name>
<dbReference type="EC" id="2.1.2.11" evidence="1"/>
<dbReference type="EMBL" id="CP000682">
    <property type="protein sequence ID" value="ABP94790.1"/>
    <property type="molecule type" value="Genomic_DNA"/>
</dbReference>
<dbReference type="RefSeq" id="WP_012020577.1">
    <property type="nucleotide sequence ID" value="NC_009440.1"/>
</dbReference>
<dbReference type="SMR" id="A4YED8"/>
<dbReference type="STRING" id="399549.Msed_0615"/>
<dbReference type="GeneID" id="91755068"/>
<dbReference type="KEGG" id="mse:Msed_0615"/>
<dbReference type="eggNOG" id="arCOG00584">
    <property type="taxonomic scope" value="Archaea"/>
</dbReference>
<dbReference type="HOGENOM" id="CLU_036645_1_0_2"/>
<dbReference type="UniPathway" id="UPA00241"/>
<dbReference type="Proteomes" id="UP000000242">
    <property type="component" value="Chromosome"/>
</dbReference>
<dbReference type="GO" id="GO:0005737">
    <property type="term" value="C:cytoplasm"/>
    <property type="evidence" value="ECO:0007669"/>
    <property type="project" value="UniProtKB-SubCell"/>
</dbReference>
<dbReference type="GO" id="GO:0003864">
    <property type="term" value="F:3-methyl-2-oxobutanoate hydroxymethyltransferase activity"/>
    <property type="evidence" value="ECO:0007669"/>
    <property type="project" value="UniProtKB-UniRule"/>
</dbReference>
<dbReference type="GO" id="GO:0000287">
    <property type="term" value="F:magnesium ion binding"/>
    <property type="evidence" value="ECO:0007669"/>
    <property type="project" value="TreeGrafter"/>
</dbReference>
<dbReference type="GO" id="GO:0015937">
    <property type="term" value="P:coenzyme A biosynthetic process"/>
    <property type="evidence" value="ECO:0007669"/>
    <property type="project" value="UniProtKB-UniRule"/>
</dbReference>
<dbReference type="GO" id="GO:0015940">
    <property type="term" value="P:pantothenate biosynthetic process"/>
    <property type="evidence" value="ECO:0007669"/>
    <property type="project" value="InterPro"/>
</dbReference>
<dbReference type="CDD" id="cd06557">
    <property type="entry name" value="KPHMT-like"/>
    <property type="match status" value="1"/>
</dbReference>
<dbReference type="FunFam" id="3.20.20.60:FF:000003">
    <property type="entry name" value="3-methyl-2-oxobutanoate hydroxymethyltransferase"/>
    <property type="match status" value="1"/>
</dbReference>
<dbReference type="Gene3D" id="3.20.20.60">
    <property type="entry name" value="Phosphoenolpyruvate-binding domains"/>
    <property type="match status" value="1"/>
</dbReference>
<dbReference type="HAMAP" id="MF_00156">
    <property type="entry name" value="PanB"/>
    <property type="match status" value="1"/>
</dbReference>
<dbReference type="InterPro" id="IPR003700">
    <property type="entry name" value="Pantoate_hydroxy_MeTrfase"/>
</dbReference>
<dbReference type="InterPro" id="IPR015813">
    <property type="entry name" value="Pyrv/PenolPyrv_kinase-like_dom"/>
</dbReference>
<dbReference type="InterPro" id="IPR040442">
    <property type="entry name" value="Pyrv_kinase-like_dom_sf"/>
</dbReference>
<dbReference type="NCBIfam" id="TIGR00222">
    <property type="entry name" value="panB"/>
    <property type="match status" value="1"/>
</dbReference>
<dbReference type="NCBIfam" id="NF001452">
    <property type="entry name" value="PRK00311.1"/>
    <property type="match status" value="1"/>
</dbReference>
<dbReference type="PANTHER" id="PTHR20881">
    <property type="entry name" value="3-METHYL-2-OXOBUTANOATE HYDROXYMETHYLTRANSFERASE"/>
    <property type="match status" value="1"/>
</dbReference>
<dbReference type="PANTHER" id="PTHR20881:SF0">
    <property type="entry name" value="3-METHYL-2-OXOBUTANOATE HYDROXYMETHYLTRANSFERASE"/>
    <property type="match status" value="1"/>
</dbReference>
<dbReference type="Pfam" id="PF02548">
    <property type="entry name" value="Pantoate_transf"/>
    <property type="match status" value="1"/>
</dbReference>
<dbReference type="PIRSF" id="PIRSF000388">
    <property type="entry name" value="Pantoate_hydroxy_MeTrfase"/>
    <property type="match status" value="1"/>
</dbReference>
<dbReference type="SUPFAM" id="SSF51621">
    <property type="entry name" value="Phosphoenolpyruvate/pyruvate domain"/>
    <property type="match status" value="1"/>
</dbReference>
<proteinExistence type="inferred from homology"/>
<evidence type="ECO:0000255" key="1">
    <source>
        <dbReference type="HAMAP-Rule" id="MF_00156"/>
    </source>
</evidence>
<gene>
    <name evidence="1" type="primary">panB</name>
    <name type="ordered locus">Msed_0615</name>
</gene>